<accession>A8Z6P5</accession>
<comment type="function">
    <text evidence="1">Allows the formation of correctly charged Gln-tRNA(Gln) through the transamidation of misacylated Glu-tRNA(Gln) in organisms which lack glutaminyl-tRNA synthetase. The reaction takes place in the presence of glutamine and ATP through an activated gamma-phospho-Glu-tRNA(Gln).</text>
</comment>
<comment type="catalytic activity">
    <reaction evidence="1">
        <text>L-glutamyl-tRNA(Gln) + L-glutamine + ATP + H2O = L-glutaminyl-tRNA(Gln) + L-glutamate + ADP + phosphate + H(+)</text>
        <dbReference type="Rhea" id="RHEA:17521"/>
        <dbReference type="Rhea" id="RHEA-COMP:9681"/>
        <dbReference type="Rhea" id="RHEA-COMP:9684"/>
        <dbReference type="ChEBI" id="CHEBI:15377"/>
        <dbReference type="ChEBI" id="CHEBI:15378"/>
        <dbReference type="ChEBI" id="CHEBI:29985"/>
        <dbReference type="ChEBI" id="CHEBI:30616"/>
        <dbReference type="ChEBI" id="CHEBI:43474"/>
        <dbReference type="ChEBI" id="CHEBI:58359"/>
        <dbReference type="ChEBI" id="CHEBI:78520"/>
        <dbReference type="ChEBI" id="CHEBI:78521"/>
        <dbReference type="ChEBI" id="CHEBI:456216"/>
        <dbReference type="EC" id="6.3.5.7"/>
    </reaction>
</comment>
<comment type="subunit">
    <text evidence="1">Heterotrimer of A, B and C subunits.</text>
</comment>
<comment type="similarity">
    <text evidence="1">Belongs to the amidase family. GatA subfamily.</text>
</comment>
<sequence>MVTLKEALKFSAEEIKNLRAELEAKIIKEKELGAYVEQLANLEIAKLGEGVPIAIKDNIQVKGWSVTSASKILQGYVAPYNATVIEKLLSKNLAPFGRTNMDEFAMGSTTESSFYGKTLNPLNHAHVPGGSSGGSAAAVAAGLAVAALGSDTGGSIRQPAAFCGCVGLKPTYGRVSRYGLGAYSSSLDQIGPIAQNVEDAAILYDAIAGHDPKDSTSADVPFVSISDKIDGNKKLKICVIKNYVENASEQTKAALNLAIEKLKSHGHSVTYTNFEDSKYDVAAYYIIATAEASANLSRYDGVRYGRRAEARNLKELYVNSRSEGFGEEVKRRILLGTFVLSSGYYDAYYIKAQKARAHIKAQYEKILEENDLIFMPVAPSTAYKFGAHSDPLQAYLSDIYTISVNLAGLPAISVPVGKDDQNLNVSAQLIAKAWDEQTLINGAKSLENLIKG</sequence>
<reference key="1">
    <citation type="submission" date="2007-10" db="EMBL/GenBank/DDBJ databases">
        <title>Genome sequence of Campylobacter concisus 13826 isolated from human feces.</title>
        <authorList>
            <person name="Fouts D.E."/>
            <person name="Mongodin E.F."/>
            <person name="Puiu D."/>
            <person name="Sebastian Y."/>
            <person name="Miller W.G."/>
            <person name="Mandrell R.E."/>
            <person name="On S."/>
            <person name="Nelson K.E."/>
        </authorList>
    </citation>
    <scope>NUCLEOTIDE SEQUENCE [LARGE SCALE GENOMIC DNA]</scope>
    <source>
        <strain>13826</strain>
    </source>
</reference>
<protein>
    <recommendedName>
        <fullName evidence="1">Glutamyl-tRNA(Gln) amidotransferase subunit A</fullName>
        <shortName evidence="1">Glu-ADT subunit A</shortName>
        <ecNumber evidence="1">6.3.5.7</ecNumber>
    </recommendedName>
</protein>
<gene>
    <name evidence="1" type="primary">gatA</name>
    <name type="ordered locus">Ccon26_16650</name>
    <name type="ORF">CCC13826_0277</name>
</gene>
<dbReference type="EC" id="6.3.5.7" evidence="1"/>
<dbReference type="EMBL" id="CP000792">
    <property type="protein sequence ID" value="ABW74824.1"/>
    <property type="molecule type" value="Genomic_DNA"/>
</dbReference>
<dbReference type="RefSeq" id="WP_048809879.1">
    <property type="nucleotide sequence ID" value="NC_009802.2"/>
</dbReference>
<dbReference type="SMR" id="A8Z6P5"/>
<dbReference type="STRING" id="360104.CCC13826_0277"/>
<dbReference type="KEGG" id="cco:CCC13826_0277"/>
<dbReference type="eggNOG" id="COG0154">
    <property type="taxonomic scope" value="Bacteria"/>
</dbReference>
<dbReference type="HOGENOM" id="CLU_009600_0_3_7"/>
<dbReference type="OrthoDB" id="9811471at2"/>
<dbReference type="Proteomes" id="UP000001121">
    <property type="component" value="Chromosome"/>
</dbReference>
<dbReference type="GO" id="GO:0030956">
    <property type="term" value="C:glutamyl-tRNA(Gln) amidotransferase complex"/>
    <property type="evidence" value="ECO:0007669"/>
    <property type="project" value="InterPro"/>
</dbReference>
<dbReference type="GO" id="GO:0005524">
    <property type="term" value="F:ATP binding"/>
    <property type="evidence" value="ECO:0007669"/>
    <property type="project" value="UniProtKB-KW"/>
</dbReference>
<dbReference type="GO" id="GO:0050567">
    <property type="term" value="F:glutaminyl-tRNA synthase (glutamine-hydrolyzing) activity"/>
    <property type="evidence" value="ECO:0007669"/>
    <property type="project" value="UniProtKB-UniRule"/>
</dbReference>
<dbReference type="GO" id="GO:0006412">
    <property type="term" value="P:translation"/>
    <property type="evidence" value="ECO:0007669"/>
    <property type="project" value="UniProtKB-UniRule"/>
</dbReference>
<dbReference type="Gene3D" id="3.90.1300.10">
    <property type="entry name" value="Amidase signature (AS) domain"/>
    <property type="match status" value="1"/>
</dbReference>
<dbReference type="HAMAP" id="MF_00120">
    <property type="entry name" value="GatA"/>
    <property type="match status" value="1"/>
</dbReference>
<dbReference type="InterPro" id="IPR000120">
    <property type="entry name" value="Amidase"/>
</dbReference>
<dbReference type="InterPro" id="IPR020556">
    <property type="entry name" value="Amidase_CS"/>
</dbReference>
<dbReference type="InterPro" id="IPR023631">
    <property type="entry name" value="Amidase_dom"/>
</dbReference>
<dbReference type="InterPro" id="IPR036928">
    <property type="entry name" value="AS_sf"/>
</dbReference>
<dbReference type="InterPro" id="IPR004412">
    <property type="entry name" value="GatA"/>
</dbReference>
<dbReference type="NCBIfam" id="TIGR00132">
    <property type="entry name" value="gatA"/>
    <property type="match status" value="1"/>
</dbReference>
<dbReference type="PANTHER" id="PTHR11895:SF151">
    <property type="entry name" value="GLUTAMYL-TRNA(GLN) AMIDOTRANSFERASE SUBUNIT A"/>
    <property type="match status" value="1"/>
</dbReference>
<dbReference type="PANTHER" id="PTHR11895">
    <property type="entry name" value="TRANSAMIDASE"/>
    <property type="match status" value="1"/>
</dbReference>
<dbReference type="Pfam" id="PF01425">
    <property type="entry name" value="Amidase"/>
    <property type="match status" value="1"/>
</dbReference>
<dbReference type="SUPFAM" id="SSF75304">
    <property type="entry name" value="Amidase signature (AS) enzymes"/>
    <property type="match status" value="1"/>
</dbReference>
<dbReference type="PROSITE" id="PS00571">
    <property type="entry name" value="AMIDASES"/>
    <property type="match status" value="1"/>
</dbReference>
<proteinExistence type="inferred from homology"/>
<organism>
    <name type="scientific">Campylobacter concisus (strain 13826)</name>
    <dbReference type="NCBI Taxonomy" id="360104"/>
    <lineage>
        <taxon>Bacteria</taxon>
        <taxon>Pseudomonadati</taxon>
        <taxon>Campylobacterota</taxon>
        <taxon>Epsilonproteobacteria</taxon>
        <taxon>Campylobacterales</taxon>
        <taxon>Campylobacteraceae</taxon>
        <taxon>Campylobacter</taxon>
    </lineage>
</organism>
<feature type="chain" id="PRO_1000071365" description="Glutamyl-tRNA(Gln) amidotransferase subunit A">
    <location>
        <begin position="1"/>
        <end position="452"/>
    </location>
</feature>
<feature type="active site" description="Charge relay system" evidence="1">
    <location>
        <position position="56"/>
    </location>
</feature>
<feature type="active site" description="Charge relay system" evidence="1">
    <location>
        <position position="131"/>
    </location>
</feature>
<feature type="active site" description="Acyl-ester intermediate" evidence="1">
    <location>
        <position position="155"/>
    </location>
</feature>
<evidence type="ECO:0000255" key="1">
    <source>
        <dbReference type="HAMAP-Rule" id="MF_00120"/>
    </source>
</evidence>
<name>GATA_CAMC1</name>
<keyword id="KW-0067">ATP-binding</keyword>
<keyword id="KW-0436">Ligase</keyword>
<keyword id="KW-0547">Nucleotide-binding</keyword>
<keyword id="KW-0648">Protein biosynthesis</keyword>